<protein>
    <recommendedName>
        <fullName>Phosphoprotein</fullName>
        <shortName>Protein P</shortName>
    </recommendedName>
    <alternativeName>
        <fullName>Protein M1</fullName>
    </alternativeName>
</protein>
<sequence>MSKIFVNPSALRSGLADLEMAEETVDLVNKNMEDSQAHLQGIPIDVETLPEDIKRLRIADYKQGQQEEDASRQEEGEDEDFYMTESENSYVPLQSYLDAVGMQIVRKMKTGDGFFKIWAQAVEDIVSYVATNFPAPVNKLQADKSTRTTLEKVKQAASSSAPSKREGPSSNMNLDSQESSGPPGLDWAASNDEDDGSIEAEIAHQIAESFSKKYKFPSRSSGIFLWNFEQLKMNLDDIVREVKGIPGVTRMARDGMKLPLRCMLGSVASNHSKRFQILVNSAKLGKLMQDDLNRYLAY</sequence>
<organismHost>
    <name type="scientific">Mammalia</name>
    <dbReference type="NCBI Taxonomy" id="40674"/>
</organismHost>
<organism>
    <name type="scientific">European bat lyssavirus 1 (strain Bat/Germany/RV9/1968)</name>
    <name type="common">EBLV1</name>
    <dbReference type="NCBI Taxonomy" id="453115"/>
    <lineage>
        <taxon>Viruses</taxon>
        <taxon>Riboviria</taxon>
        <taxon>Orthornavirae</taxon>
        <taxon>Negarnaviricota</taxon>
        <taxon>Haploviricotina</taxon>
        <taxon>Monjiviricetes</taxon>
        <taxon>Mononegavirales</taxon>
        <taxon>Rhabdoviridae</taxon>
        <taxon>Alpharhabdovirinae</taxon>
        <taxon>Lyssavirus</taxon>
        <taxon>Lyssavirus hamburg</taxon>
    </lineage>
</organism>
<evidence type="ECO:0000250" key="1"/>
<evidence type="ECO:0000256" key="2">
    <source>
        <dbReference type="SAM" id="MobiDB-lite"/>
    </source>
</evidence>
<evidence type="ECO:0000305" key="3"/>
<name>PHOSP_EBLV1</name>
<gene>
    <name type="primary">P</name>
</gene>
<feature type="chain" id="PRO_0000299095" description="Phosphoprotein">
    <location>
        <begin position="1"/>
        <end position="298"/>
    </location>
</feature>
<feature type="region of interest" description="Disordered" evidence="2">
    <location>
        <begin position="61"/>
        <end position="80"/>
    </location>
</feature>
<feature type="region of interest" description="Disordered" evidence="2">
    <location>
        <begin position="144"/>
        <end position="192"/>
    </location>
</feature>
<feature type="short sequence motif" description="Nuclear export signal" evidence="1">
    <location>
        <begin position="49"/>
        <end position="58"/>
    </location>
</feature>
<feature type="short sequence motif" description="Nuclear localization signal" evidence="1">
    <location>
        <begin position="212"/>
        <end position="215"/>
    </location>
</feature>
<feature type="compositionally biased region" description="Basic and acidic residues" evidence="2">
    <location>
        <begin position="144"/>
        <end position="154"/>
    </location>
</feature>
<feature type="compositionally biased region" description="Polar residues" evidence="2">
    <location>
        <begin position="156"/>
        <end position="180"/>
    </location>
</feature>
<feature type="modified residue" description="Phosphoserine; by host PKC" evidence="1">
    <location>
        <position position="163"/>
    </location>
</feature>
<feature type="modified residue" description="Phosphoserine; by host PKC" evidence="1">
    <location>
        <position position="211"/>
    </location>
</feature>
<feature type="modified residue" description="Phosphoserine; by host PKC" evidence="1">
    <location>
        <position position="272"/>
    </location>
</feature>
<feature type="splice variant" id="VSP_027556" description="In isoform P5." evidence="3">
    <location>
        <begin position="1"/>
        <end position="82"/>
    </location>
</feature>
<feature type="splice variant" id="VSP_027557" description="In isoform P2." evidence="3">
    <location>
        <begin position="1"/>
        <end position="19"/>
    </location>
</feature>
<feature type="sequence variant" description="In strain: Isolate Bat/Denmark/V002/1986 and Isolate Bat/Germany/RV9/1968.">
    <original>Q</original>
    <variation>R</variation>
    <location>
        <position position="66"/>
    </location>
</feature>
<feature type="sequence variant" description="In strain: Isolate Bat/Denmark/V002/1986 and Isolate Bat/Germany/RV9/1968.">
    <original>R</original>
    <variation>Q</variation>
    <location>
        <position position="147"/>
    </location>
</feature>
<feature type="sequence variant" description="In strain: Isolate Bat/Denmark/V002/1986 and Isolate Bat/Germany/RV9/1968.">
    <original>A</original>
    <variation>V</variation>
    <location>
        <position position="157"/>
    </location>
</feature>
<feature type="sequence variant" description="In strain: Isolate Bat/Denmark/V002/1986 and Isolate Bat/Germany/RV9/1968.">
    <original>S</original>
    <variation>N</variation>
    <location>
        <position position="163"/>
    </location>
</feature>
<feature type="sequence variant" description="In strain: Isolate Bat/Denmark/V002/1986.">
    <original>S</original>
    <variation>L</variation>
    <location>
        <position position="179"/>
    </location>
</feature>
<feature type="sequence variant" description="In strain: Isolate Bat/Denmark/V002/1986.">
    <original>V</original>
    <variation>E</variation>
    <location>
        <position position="248"/>
    </location>
</feature>
<accession>A4UHP9</accession>
<accession>O56772</accession>
<accession>O56776</accession>
<proteinExistence type="evidence at transcript level"/>
<dbReference type="EMBL" id="AF049117">
    <property type="protein sequence ID" value="AAC04587.1"/>
    <property type="molecule type" value="mRNA"/>
</dbReference>
<dbReference type="EMBL" id="AF049113">
    <property type="protein sequence ID" value="AAC04583.1"/>
    <property type="molecule type" value="mRNA"/>
</dbReference>
<dbReference type="EMBL" id="EF157976">
    <property type="protein sequence ID" value="ABO65244.1"/>
    <property type="molecule type" value="Genomic_RNA"/>
</dbReference>
<dbReference type="RefSeq" id="YP_001285389.1">
    <property type="nucleotide sequence ID" value="NC_009527.1"/>
</dbReference>
<dbReference type="SMR" id="A4UHP9"/>
<dbReference type="GeneID" id="5219910"/>
<dbReference type="KEGG" id="vg:5219910"/>
<dbReference type="Proteomes" id="UP000008926">
    <property type="component" value="Segment"/>
</dbReference>
<dbReference type="GO" id="GO:0030430">
    <property type="term" value="C:host cell cytoplasm"/>
    <property type="evidence" value="ECO:0007669"/>
    <property type="project" value="UniProtKB-SubCell"/>
</dbReference>
<dbReference type="GO" id="GO:0042025">
    <property type="term" value="C:host cell nucleus"/>
    <property type="evidence" value="ECO:0007669"/>
    <property type="project" value="UniProtKB-SubCell"/>
</dbReference>
<dbReference type="GO" id="GO:0044423">
    <property type="term" value="C:virion component"/>
    <property type="evidence" value="ECO:0007669"/>
    <property type="project" value="UniProtKB-KW"/>
</dbReference>
<dbReference type="GO" id="GO:0003968">
    <property type="term" value="F:RNA-directed RNA polymerase activity"/>
    <property type="evidence" value="ECO:0007669"/>
    <property type="project" value="InterPro"/>
</dbReference>
<dbReference type="GO" id="GO:0052170">
    <property type="term" value="P:symbiont-mediated suppression of host innate immune response"/>
    <property type="evidence" value="ECO:0007669"/>
    <property type="project" value="UniProtKB-KW"/>
</dbReference>
<dbReference type="GO" id="GO:0039563">
    <property type="term" value="P:symbiont-mediated suppression of host JAK-STAT cascade via inhibition of STAT1 activity"/>
    <property type="evidence" value="ECO:0007669"/>
    <property type="project" value="UniProtKB-KW"/>
</dbReference>
<dbReference type="GO" id="GO:0039564">
    <property type="term" value="P:symbiont-mediated suppression of host JAK-STAT cascade via inhibition of STAT2 activity"/>
    <property type="evidence" value="ECO:0007669"/>
    <property type="project" value="UniProtKB-KW"/>
</dbReference>
<dbReference type="GO" id="GO:0039502">
    <property type="term" value="P:symbiont-mediated suppression of host type I interferon-mediated signaling pathway"/>
    <property type="evidence" value="ECO:0007669"/>
    <property type="project" value="UniProtKB-KW"/>
</dbReference>
<dbReference type="GO" id="GO:0019083">
    <property type="term" value="P:viral transcription"/>
    <property type="evidence" value="ECO:0007669"/>
    <property type="project" value="InterPro"/>
</dbReference>
<dbReference type="CDD" id="cd21032">
    <property type="entry name" value="RABV_P-protein-C_like"/>
    <property type="match status" value="1"/>
</dbReference>
<dbReference type="Gene3D" id="6.10.140.1560">
    <property type="match status" value="1"/>
</dbReference>
<dbReference type="Gene3D" id="1.20.120.820">
    <property type="entry name" value="Phosphoprotein, C-terminal domain"/>
    <property type="match status" value="1"/>
</dbReference>
<dbReference type="InterPro" id="IPR004259">
    <property type="entry name" value="PP_M1-like"/>
</dbReference>
<dbReference type="InterPro" id="IPR037199">
    <property type="entry name" value="PP_M1_C"/>
</dbReference>
<dbReference type="InterPro" id="IPR049506">
    <property type="entry name" value="RABV_P-like_C"/>
</dbReference>
<dbReference type="Pfam" id="PF03012">
    <property type="entry name" value="PP_M1"/>
    <property type="match status" value="1"/>
</dbReference>
<dbReference type="SUPFAM" id="SSF118173">
    <property type="entry name" value="Phosphoprotein M1, C-terminal domain"/>
    <property type="match status" value="1"/>
</dbReference>
<comment type="function">
    <text evidence="1">Non catalytic polymerase cofactor and regulatory protein that plays a role in viral transcription and replication. Stabilizes the RNA polymerase L to the N-RNA template and binds the soluble protein N, preventing it from encapsidating non-genomic RNA. Also inhibits host IFN-alpha and IFN-beta signaling by binding and retaining phosphorylated STAT1 in the cytoplasm or by inhibiting the DNA binding of STAT1 in the nucleus (By similarity).</text>
</comment>
<comment type="subunit">
    <text evidence="1">Homotrimer when phosphorylated. This trimer is stabilized by binding to the L protein. Binds soluble protein N, and ribonucleocapsid. Interacts with host STAT1, STAT2, DYNLL1, DYNLL2 and PML. Isoform P3 binds host PML (By similarity).</text>
</comment>
<comment type="subcellular location">
    <molecule>Phosphoprotein</molecule>
    <subcellularLocation>
        <location>Virion</location>
    </subcellularLocation>
    <subcellularLocation>
        <location evidence="1">Host cytoplasm</location>
    </subcellularLocation>
</comment>
<comment type="subcellular location">
    <molecule>Isoform P2</molecule>
    <subcellularLocation>
        <location evidence="1">Host cytoplasm</location>
    </subcellularLocation>
</comment>
<comment type="subcellular location">
    <molecule>Isoform P5</molecule>
    <subcellularLocation>
        <location evidence="1">Host nucleus</location>
    </subcellularLocation>
</comment>
<comment type="alternative products">
    <event type="alternative initiation"/>
    <isoform>
        <id>A4UHP9-1</id>
        <name>P</name>
        <sequence type="displayed"/>
    </isoform>
    <isoform>
        <id>A4UHP9-2</id>
        <name>P2</name>
        <sequence type="described" ref="VSP_027557"/>
    </isoform>
    <isoform>
        <id>A4UHP9-3</id>
        <name>P5</name>
        <sequence type="described" ref="VSP_027556"/>
    </isoform>
</comment>
<comment type="PTM">
    <text evidence="1">Phosphorylated by host PKC and by an unknown kinase.</text>
</comment>
<comment type="similarity">
    <text evidence="3">Belongs to the lyssavirus protein P family.</text>
</comment>
<reference key="1">
    <citation type="journal article" date="2002" name="Virology">
        <title>Lyssavirus P gene characterisation provides insights into the phylogeny of the genus and identifies structural similarities and diversity within the encoded phosphoprotein.</title>
        <authorList>
            <person name="Nadin-Davis S.A."/>
            <person name="Abdel-Malik M."/>
            <person name="Armstrong J."/>
            <person name="Wandeler A.I."/>
        </authorList>
    </citation>
    <scope>NUCLEOTIDE SEQUENCE [MRNA]</scope>
    <source>
        <strain>Isolate Bat/Denmark/V002/1986</strain>
        <strain>Isolate Bat/Holland/V023/1988</strain>
    </source>
</reference>
<reference key="2">
    <citation type="journal article" date="2007" name="J. Gen. Virol.">
        <title>Comparative analysis of the full genome sequence of European bat lyssavirus type 1 and type 2 with other lyssaviruses and evidence for a conserved transcription termination and polyadenylation motif in the G-L 3' non-translated region.</title>
        <authorList>
            <person name="Marston D.A."/>
            <person name="McElhinney L.M."/>
            <person name="Johnson N."/>
            <person name="Muller T."/>
            <person name="Conzelmann K.K."/>
            <person name="Tordo N."/>
            <person name="Fooks A.R."/>
        </authorList>
    </citation>
    <scope>NUCLEOTIDE SEQUENCE [MRNA]</scope>
</reference>
<keyword id="KW-0024">Alternative initiation</keyword>
<keyword id="KW-0143">Chaperone</keyword>
<keyword id="KW-1035">Host cytoplasm</keyword>
<keyword id="KW-1048">Host nucleus</keyword>
<keyword id="KW-0945">Host-virus interaction</keyword>
<keyword id="KW-1090">Inhibition of host innate immune response by virus</keyword>
<keyword id="KW-1114">Inhibition of host interferon signaling pathway by virus</keyword>
<keyword id="KW-1105">Inhibition of host STAT1 by virus</keyword>
<keyword id="KW-1106">Inhibition of host STAT2 by virus</keyword>
<keyword id="KW-0922">Interferon antiviral system evasion</keyword>
<keyword id="KW-0597">Phosphoprotein</keyword>
<keyword id="KW-1185">Reference proteome</keyword>
<keyword id="KW-0899">Viral immunoevasion</keyword>
<keyword id="KW-0693">Viral RNA replication</keyword>
<keyword id="KW-0946">Virion</keyword>